<dbReference type="EMBL" id="AM286280">
    <property type="protein sequence ID" value="CAL08156.1"/>
    <property type="molecule type" value="Genomic_DNA"/>
</dbReference>
<dbReference type="RefSeq" id="WP_003024803.1">
    <property type="nucleotide sequence ID" value="NC_008245.1"/>
</dbReference>
<dbReference type="SMR" id="Q14JT9"/>
<dbReference type="GeneID" id="75264696"/>
<dbReference type="KEGG" id="ftf:FTF0140"/>
<dbReference type="HOGENOM" id="CLU_074237_2_0_6"/>
<dbReference type="GO" id="GO:0022625">
    <property type="term" value="C:cytosolic large ribosomal subunit"/>
    <property type="evidence" value="ECO:0007669"/>
    <property type="project" value="TreeGrafter"/>
</dbReference>
<dbReference type="GO" id="GO:0070180">
    <property type="term" value="F:large ribosomal subunit rRNA binding"/>
    <property type="evidence" value="ECO:0007669"/>
    <property type="project" value="UniProtKB-UniRule"/>
</dbReference>
<dbReference type="GO" id="GO:0003735">
    <property type="term" value="F:structural constituent of ribosome"/>
    <property type="evidence" value="ECO:0007669"/>
    <property type="project" value="InterPro"/>
</dbReference>
<dbReference type="GO" id="GO:0006412">
    <property type="term" value="P:translation"/>
    <property type="evidence" value="ECO:0007669"/>
    <property type="project" value="UniProtKB-UniRule"/>
</dbReference>
<dbReference type="CDD" id="cd00349">
    <property type="entry name" value="Ribosomal_L11"/>
    <property type="match status" value="1"/>
</dbReference>
<dbReference type="FunFam" id="1.10.10.250:FF:000001">
    <property type="entry name" value="50S ribosomal protein L11"/>
    <property type="match status" value="1"/>
</dbReference>
<dbReference type="FunFam" id="3.30.1550.10:FF:000001">
    <property type="entry name" value="50S ribosomal protein L11"/>
    <property type="match status" value="1"/>
</dbReference>
<dbReference type="Gene3D" id="1.10.10.250">
    <property type="entry name" value="Ribosomal protein L11, C-terminal domain"/>
    <property type="match status" value="1"/>
</dbReference>
<dbReference type="Gene3D" id="3.30.1550.10">
    <property type="entry name" value="Ribosomal protein L11/L12, N-terminal domain"/>
    <property type="match status" value="1"/>
</dbReference>
<dbReference type="HAMAP" id="MF_00736">
    <property type="entry name" value="Ribosomal_uL11"/>
    <property type="match status" value="1"/>
</dbReference>
<dbReference type="InterPro" id="IPR000911">
    <property type="entry name" value="Ribosomal_uL11"/>
</dbReference>
<dbReference type="InterPro" id="IPR006519">
    <property type="entry name" value="Ribosomal_uL11_bac-typ"/>
</dbReference>
<dbReference type="InterPro" id="IPR020783">
    <property type="entry name" value="Ribosomal_uL11_C"/>
</dbReference>
<dbReference type="InterPro" id="IPR036769">
    <property type="entry name" value="Ribosomal_uL11_C_sf"/>
</dbReference>
<dbReference type="InterPro" id="IPR020785">
    <property type="entry name" value="Ribosomal_uL11_CS"/>
</dbReference>
<dbReference type="InterPro" id="IPR020784">
    <property type="entry name" value="Ribosomal_uL11_N"/>
</dbReference>
<dbReference type="InterPro" id="IPR036796">
    <property type="entry name" value="Ribosomal_uL11_N_sf"/>
</dbReference>
<dbReference type="NCBIfam" id="TIGR01632">
    <property type="entry name" value="L11_bact"/>
    <property type="match status" value="1"/>
</dbReference>
<dbReference type="PANTHER" id="PTHR11661">
    <property type="entry name" value="60S RIBOSOMAL PROTEIN L12"/>
    <property type="match status" value="1"/>
</dbReference>
<dbReference type="PANTHER" id="PTHR11661:SF1">
    <property type="entry name" value="LARGE RIBOSOMAL SUBUNIT PROTEIN UL11M"/>
    <property type="match status" value="1"/>
</dbReference>
<dbReference type="Pfam" id="PF00298">
    <property type="entry name" value="Ribosomal_L11"/>
    <property type="match status" value="1"/>
</dbReference>
<dbReference type="Pfam" id="PF03946">
    <property type="entry name" value="Ribosomal_L11_N"/>
    <property type="match status" value="1"/>
</dbReference>
<dbReference type="SMART" id="SM00649">
    <property type="entry name" value="RL11"/>
    <property type="match status" value="1"/>
</dbReference>
<dbReference type="SUPFAM" id="SSF54747">
    <property type="entry name" value="Ribosomal L11/L12e N-terminal domain"/>
    <property type="match status" value="1"/>
</dbReference>
<dbReference type="SUPFAM" id="SSF46906">
    <property type="entry name" value="Ribosomal protein L11, C-terminal domain"/>
    <property type="match status" value="1"/>
</dbReference>
<dbReference type="PROSITE" id="PS00359">
    <property type="entry name" value="RIBOSOMAL_L11"/>
    <property type="match status" value="1"/>
</dbReference>
<sequence length="144" mass="15256">MAKKKIEAIIKLQVAAGKANPSPPIGPALGQHGVNIMGFCKEFNAKTQGMEPGMPIPVEISVYSDRSFTFEMKTPPASYLIKKAINVKSGSSKPSKEFVGTITRAQLEEIAKVKDPDLTAADLDAAVRIIAGSARSMGVKVEGV</sequence>
<protein>
    <recommendedName>
        <fullName evidence="1">Large ribosomal subunit protein uL11</fullName>
    </recommendedName>
    <alternativeName>
        <fullName evidence="2">50S ribosomal protein L11</fullName>
    </alternativeName>
</protein>
<name>RL11_FRAT1</name>
<comment type="function">
    <text evidence="1">Forms part of the ribosomal stalk which helps the ribosome interact with GTP-bound translation factors.</text>
</comment>
<comment type="subunit">
    <text evidence="1">Part of the ribosomal stalk of the 50S ribosomal subunit. Interacts with L10 and the large rRNA to form the base of the stalk. L10 forms an elongated spine to which L12 dimers bind in a sequential fashion forming a multimeric L10(L12)X complex.</text>
</comment>
<comment type="PTM">
    <text evidence="1">One or more lysine residues are methylated.</text>
</comment>
<comment type="similarity">
    <text evidence="1">Belongs to the universal ribosomal protein uL11 family.</text>
</comment>
<proteinExistence type="inferred from homology"/>
<evidence type="ECO:0000255" key="1">
    <source>
        <dbReference type="HAMAP-Rule" id="MF_00736"/>
    </source>
</evidence>
<evidence type="ECO:0000305" key="2"/>
<keyword id="KW-0488">Methylation</keyword>
<keyword id="KW-0687">Ribonucleoprotein</keyword>
<keyword id="KW-0689">Ribosomal protein</keyword>
<keyword id="KW-0694">RNA-binding</keyword>
<keyword id="KW-0699">rRNA-binding</keyword>
<accession>Q14JT9</accession>
<gene>
    <name evidence="1" type="primary">rplK</name>
    <name type="ordered locus">FTF0140</name>
</gene>
<feature type="chain" id="PRO_0000258155" description="Large ribosomal subunit protein uL11">
    <location>
        <begin position="1"/>
        <end position="144"/>
    </location>
</feature>
<organism>
    <name type="scientific">Francisella tularensis subsp. tularensis (strain FSC 198)</name>
    <dbReference type="NCBI Taxonomy" id="393115"/>
    <lineage>
        <taxon>Bacteria</taxon>
        <taxon>Pseudomonadati</taxon>
        <taxon>Pseudomonadota</taxon>
        <taxon>Gammaproteobacteria</taxon>
        <taxon>Thiotrichales</taxon>
        <taxon>Francisellaceae</taxon>
        <taxon>Francisella</taxon>
    </lineage>
</organism>
<reference key="1">
    <citation type="journal article" date="2007" name="PLoS ONE">
        <title>Genome sequencing shows that European isolates of Francisella tularensis subspecies tularensis are almost identical to US laboratory strain Schu S4.</title>
        <authorList>
            <person name="Chaudhuri R.R."/>
            <person name="Ren C.-P."/>
            <person name="Desmond L."/>
            <person name="Vincent G.A."/>
            <person name="Silman N.J."/>
            <person name="Brehm J.K."/>
            <person name="Elmore M.J."/>
            <person name="Hudson M.J."/>
            <person name="Forsman M."/>
            <person name="Isherwood K.E."/>
            <person name="Gurycova D."/>
            <person name="Minton N.P."/>
            <person name="Titball R.W."/>
            <person name="Pallen M.J."/>
            <person name="Vipond R."/>
        </authorList>
    </citation>
    <scope>NUCLEOTIDE SEQUENCE [LARGE SCALE GENOMIC DNA]</scope>
    <source>
        <strain>FSC 198</strain>
    </source>
</reference>